<name>FLGH_BORBR</name>
<protein>
    <recommendedName>
        <fullName evidence="1">Flagellar L-ring protein</fullName>
    </recommendedName>
    <alternativeName>
        <fullName evidence="1">Basal body L-ring protein</fullName>
    </alternativeName>
</protein>
<dbReference type="EMBL" id="BX640444">
    <property type="protein sequence ID" value="CAE33059.1"/>
    <property type="molecule type" value="Genomic_DNA"/>
</dbReference>
<dbReference type="SMR" id="Q7WJD2"/>
<dbReference type="DNASU" id="2659762"/>
<dbReference type="KEGG" id="bbr:BB2565"/>
<dbReference type="eggNOG" id="COG2063">
    <property type="taxonomic scope" value="Bacteria"/>
</dbReference>
<dbReference type="HOGENOM" id="CLU_069313_0_0_4"/>
<dbReference type="Proteomes" id="UP000001027">
    <property type="component" value="Chromosome"/>
</dbReference>
<dbReference type="GO" id="GO:0009427">
    <property type="term" value="C:bacterial-type flagellum basal body, distal rod, L ring"/>
    <property type="evidence" value="ECO:0007669"/>
    <property type="project" value="InterPro"/>
</dbReference>
<dbReference type="GO" id="GO:0009279">
    <property type="term" value="C:cell outer membrane"/>
    <property type="evidence" value="ECO:0007669"/>
    <property type="project" value="UniProtKB-SubCell"/>
</dbReference>
<dbReference type="GO" id="GO:0003774">
    <property type="term" value="F:cytoskeletal motor activity"/>
    <property type="evidence" value="ECO:0007669"/>
    <property type="project" value="InterPro"/>
</dbReference>
<dbReference type="GO" id="GO:0071973">
    <property type="term" value="P:bacterial-type flagellum-dependent cell motility"/>
    <property type="evidence" value="ECO:0007669"/>
    <property type="project" value="InterPro"/>
</dbReference>
<dbReference type="HAMAP" id="MF_00415">
    <property type="entry name" value="FlgH"/>
    <property type="match status" value="1"/>
</dbReference>
<dbReference type="InterPro" id="IPR000527">
    <property type="entry name" value="Flag_Lring"/>
</dbReference>
<dbReference type="NCBIfam" id="NF009340">
    <property type="entry name" value="PRK12700.1"/>
    <property type="match status" value="1"/>
</dbReference>
<dbReference type="PANTHER" id="PTHR34933">
    <property type="entry name" value="FLAGELLAR L-RING PROTEIN"/>
    <property type="match status" value="1"/>
</dbReference>
<dbReference type="PANTHER" id="PTHR34933:SF3">
    <property type="entry name" value="FLAGELLAR L-RING PROTEIN"/>
    <property type="match status" value="1"/>
</dbReference>
<dbReference type="Pfam" id="PF02107">
    <property type="entry name" value="FlgH"/>
    <property type="match status" value="1"/>
</dbReference>
<dbReference type="PRINTS" id="PR01008">
    <property type="entry name" value="FLGLRINGFLGH"/>
</dbReference>
<dbReference type="PROSITE" id="PS51257">
    <property type="entry name" value="PROKAR_LIPOPROTEIN"/>
    <property type="match status" value="1"/>
</dbReference>
<gene>
    <name evidence="1" type="primary">flgH</name>
    <name type="ordered locus">BB2565</name>
</gene>
<comment type="function">
    <text evidence="1">Assembles around the rod to form the L-ring and probably protects the motor/basal body from shearing forces during rotation.</text>
</comment>
<comment type="subunit">
    <text evidence="1">The basal body constitutes a major portion of the flagellar organelle and consists of four rings (L,P,S, and M) mounted on a central rod.</text>
</comment>
<comment type="subcellular location">
    <subcellularLocation>
        <location evidence="1">Cell outer membrane</location>
        <topology evidence="1">Lipid-anchor</topology>
    </subcellularLocation>
    <subcellularLocation>
        <location evidence="1">Bacterial flagellum basal body</location>
    </subcellularLocation>
</comment>
<comment type="similarity">
    <text evidence="1">Belongs to the FlgH family.</text>
</comment>
<sequence>MMLKTVLRLPVCAALLALAAGCAMIPPEPVVTGPLTAPPPPPPQPSARPNGSIYQPSAYGNYPLFEDRRPRNVGDIVTIVLEEKTNAAKGVATNTSRDGSATLGVAAAPRFMDGIINDKLDTDISGGNTANGTGKSSANNTFTGTITTTVIGVLPNGNLQIAGEKQIAINRGSEYVRFSGVVDPRSITGSNTVSSTRVADARIEYRSKGVMDEVQTMGWLQRFFLIASPF</sequence>
<accession>Q7WJD2</accession>
<keyword id="KW-0975">Bacterial flagellum</keyword>
<keyword id="KW-0998">Cell outer membrane</keyword>
<keyword id="KW-0449">Lipoprotein</keyword>
<keyword id="KW-0472">Membrane</keyword>
<keyword id="KW-0564">Palmitate</keyword>
<keyword id="KW-0732">Signal</keyword>
<evidence type="ECO:0000255" key="1">
    <source>
        <dbReference type="HAMAP-Rule" id="MF_00415"/>
    </source>
</evidence>
<evidence type="ECO:0000256" key="2">
    <source>
        <dbReference type="SAM" id="MobiDB-lite"/>
    </source>
</evidence>
<proteinExistence type="inferred from homology"/>
<feature type="signal peptide" evidence="1">
    <location>
        <begin position="1"/>
        <end position="21"/>
    </location>
</feature>
<feature type="chain" id="PRO_0000009423" description="Flagellar L-ring protein">
    <location>
        <begin position="22"/>
        <end position="230"/>
    </location>
</feature>
<feature type="region of interest" description="Disordered" evidence="2">
    <location>
        <begin position="34"/>
        <end position="53"/>
    </location>
</feature>
<feature type="compositionally biased region" description="Pro residues" evidence="2">
    <location>
        <begin position="36"/>
        <end position="46"/>
    </location>
</feature>
<feature type="lipid moiety-binding region" description="N-palmitoyl cysteine" evidence="1">
    <location>
        <position position="22"/>
    </location>
</feature>
<feature type="lipid moiety-binding region" description="S-diacylglycerol cysteine" evidence="1">
    <location>
        <position position="22"/>
    </location>
</feature>
<reference key="1">
    <citation type="journal article" date="2003" name="Nat. Genet.">
        <title>Comparative analysis of the genome sequences of Bordetella pertussis, Bordetella parapertussis and Bordetella bronchiseptica.</title>
        <authorList>
            <person name="Parkhill J."/>
            <person name="Sebaihia M."/>
            <person name="Preston A."/>
            <person name="Murphy L.D."/>
            <person name="Thomson N.R."/>
            <person name="Harris D.E."/>
            <person name="Holden M.T.G."/>
            <person name="Churcher C.M."/>
            <person name="Bentley S.D."/>
            <person name="Mungall K.L."/>
            <person name="Cerdeno-Tarraga A.-M."/>
            <person name="Temple L."/>
            <person name="James K.D."/>
            <person name="Harris B."/>
            <person name="Quail M.A."/>
            <person name="Achtman M."/>
            <person name="Atkin R."/>
            <person name="Baker S."/>
            <person name="Basham D."/>
            <person name="Bason N."/>
            <person name="Cherevach I."/>
            <person name="Chillingworth T."/>
            <person name="Collins M."/>
            <person name="Cronin A."/>
            <person name="Davis P."/>
            <person name="Doggett J."/>
            <person name="Feltwell T."/>
            <person name="Goble A."/>
            <person name="Hamlin N."/>
            <person name="Hauser H."/>
            <person name="Holroyd S."/>
            <person name="Jagels K."/>
            <person name="Leather S."/>
            <person name="Moule S."/>
            <person name="Norberczak H."/>
            <person name="O'Neil S."/>
            <person name="Ormond D."/>
            <person name="Price C."/>
            <person name="Rabbinowitsch E."/>
            <person name="Rutter S."/>
            <person name="Sanders M."/>
            <person name="Saunders D."/>
            <person name="Seeger K."/>
            <person name="Sharp S."/>
            <person name="Simmonds M."/>
            <person name="Skelton J."/>
            <person name="Squares R."/>
            <person name="Squares S."/>
            <person name="Stevens K."/>
            <person name="Unwin L."/>
            <person name="Whitehead S."/>
            <person name="Barrell B.G."/>
            <person name="Maskell D.J."/>
        </authorList>
    </citation>
    <scope>NUCLEOTIDE SEQUENCE [LARGE SCALE GENOMIC DNA]</scope>
    <source>
        <strain>ATCC BAA-588 / NCTC 13252 / RB50</strain>
    </source>
</reference>
<organism>
    <name type="scientific">Bordetella bronchiseptica (strain ATCC BAA-588 / NCTC 13252 / RB50)</name>
    <name type="common">Alcaligenes bronchisepticus</name>
    <dbReference type="NCBI Taxonomy" id="257310"/>
    <lineage>
        <taxon>Bacteria</taxon>
        <taxon>Pseudomonadati</taxon>
        <taxon>Pseudomonadota</taxon>
        <taxon>Betaproteobacteria</taxon>
        <taxon>Burkholderiales</taxon>
        <taxon>Alcaligenaceae</taxon>
        <taxon>Bordetella</taxon>
    </lineage>
</organism>